<name>RS8_MYCLB</name>
<sequence>MTMTDPIADFLTRLRNANSAYHDEVTVPHSNIKANIAQILKNEGYIRDFRTEDARVGKSLIIQLKYGPSRERSIAGLRRVSKPGLRVYAKSINLPRVLGGLGVVIISTSSGLLTDRQAARQGVGGEVLAYVW</sequence>
<evidence type="ECO:0000255" key="1">
    <source>
        <dbReference type="HAMAP-Rule" id="MF_01302"/>
    </source>
</evidence>
<evidence type="ECO:0000305" key="2"/>
<dbReference type="EMBL" id="FM211192">
    <property type="protein sequence ID" value="CAR71941.1"/>
    <property type="molecule type" value="Genomic_DNA"/>
</dbReference>
<dbReference type="SMR" id="B8ZSA5"/>
<dbReference type="KEGG" id="mlb:MLBr01845"/>
<dbReference type="HOGENOM" id="CLU_098428_0_1_11"/>
<dbReference type="Proteomes" id="UP000006900">
    <property type="component" value="Chromosome"/>
</dbReference>
<dbReference type="GO" id="GO:1990904">
    <property type="term" value="C:ribonucleoprotein complex"/>
    <property type="evidence" value="ECO:0007669"/>
    <property type="project" value="UniProtKB-KW"/>
</dbReference>
<dbReference type="GO" id="GO:0005840">
    <property type="term" value="C:ribosome"/>
    <property type="evidence" value="ECO:0007669"/>
    <property type="project" value="UniProtKB-KW"/>
</dbReference>
<dbReference type="GO" id="GO:0019843">
    <property type="term" value="F:rRNA binding"/>
    <property type="evidence" value="ECO:0007669"/>
    <property type="project" value="UniProtKB-UniRule"/>
</dbReference>
<dbReference type="GO" id="GO:0003735">
    <property type="term" value="F:structural constituent of ribosome"/>
    <property type="evidence" value="ECO:0007669"/>
    <property type="project" value="InterPro"/>
</dbReference>
<dbReference type="GO" id="GO:0006412">
    <property type="term" value="P:translation"/>
    <property type="evidence" value="ECO:0007669"/>
    <property type="project" value="UniProtKB-UniRule"/>
</dbReference>
<dbReference type="FunFam" id="3.30.1370.30:FF:000002">
    <property type="entry name" value="30S ribosomal protein S8"/>
    <property type="match status" value="1"/>
</dbReference>
<dbReference type="FunFam" id="3.30.1490.10:FF:000001">
    <property type="entry name" value="30S ribosomal protein S8"/>
    <property type="match status" value="1"/>
</dbReference>
<dbReference type="Gene3D" id="3.30.1370.30">
    <property type="match status" value="1"/>
</dbReference>
<dbReference type="Gene3D" id="3.30.1490.10">
    <property type="match status" value="1"/>
</dbReference>
<dbReference type="HAMAP" id="MF_01302_B">
    <property type="entry name" value="Ribosomal_uS8_B"/>
    <property type="match status" value="1"/>
</dbReference>
<dbReference type="InterPro" id="IPR000630">
    <property type="entry name" value="Ribosomal_uS8"/>
</dbReference>
<dbReference type="InterPro" id="IPR047863">
    <property type="entry name" value="Ribosomal_uS8_CS"/>
</dbReference>
<dbReference type="InterPro" id="IPR035987">
    <property type="entry name" value="Ribosomal_uS8_sf"/>
</dbReference>
<dbReference type="NCBIfam" id="NF001109">
    <property type="entry name" value="PRK00136.1"/>
    <property type="match status" value="1"/>
</dbReference>
<dbReference type="PANTHER" id="PTHR11758">
    <property type="entry name" value="40S RIBOSOMAL PROTEIN S15A"/>
    <property type="match status" value="1"/>
</dbReference>
<dbReference type="Pfam" id="PF00410">
    <property type="entry name" value="Ribosomal_S8"/>
    <property type="match status" value="1"/>
</dbReference>
<dbReference type="SUPFAM" id="SSF56047">
    <property type="entry name" value="Ribosomal protein S8"/>
    <property type="match status" value="1"/>
</dbReference>
<dbReference type="PROSITE" id="PS00053">
    <property type="entry name" value="RIBOSOMAL_S8"/>
    <property type="match status" value="1"/>
</dbReference>
<protein>
    <recommendedName>
        <fullName evidence="1">Small ribosomal subunit protein uS8</fullName>
    </recommendedName>
    <alternativeName>
        <fullName evidence="2">30S ribosomal protein S8</fullName>
    </alternativeName>
</protein>
<comment type="function">
    <text evidence="1">One of the primary rRNA binding proteins, it binds directly to 16S rRNA central domain where it helps coordinate assembly of the platform of the 30S subunit.</text>
</comment>
<comment type="subunit">
    <text evidence="1">Part of the 30S ribosomal subunit. Contacts proteins S5 and S12.</text>
</comment>
<comment type="similarity">
    <text evidence="1">Belongs to the universal ribosomal protein uS8 family.</text>
</comment>
<gene>
    <name evidence="1" type="primary">rpsH</name>
    <name type="ordered locus">MLBr01845</name>
</gene>
<feature type="chain" id="PRO_1000165342" description="Small ribosomal subunit protein uS8">
    <location>
        <begin position="1"/>
        <end position="132"/>
    </location>
</feature>
<organism>
    <name type="scientific">Mycobacterium leprae (strain Br4923)</name>
    <dbReference type="NCBI Taxonomy" id="561304"/>
    <lineage>
        <taxon>Bacteria</taxon>
        <taxon>Bacillati</taxon>
        <taxon>Actinomycetota</taxon>
        <taxon>Actinomycetes</taxon>
        <taxon>Mycobacteriales</taxon>
        <taxon>Mycobacteriaceae</taxon>
        <taxon>Mycobacterium</taxon>
    </lineage>
</organism>
<accession>B8ZSA5</accession>
<proteinExistence type="inferred from homology"/>
<reference key="1">
    <citation type="journal article" date="2009" name="Nat. Genet.">
        <title>Comparative genomic and phylogeographic analysis of Mycobacterium leprae.</title>
        <authorList>
            <person name="Monot M."/>
            <person name="Honore N."/>
            <person name="Garnier T."/>
            <person name="Zidane N."/>
            <person name="Sherafi D."/>
            <person name="Paniz-Mondolfi A."/>
            <person name="Matsuoka M."/>
            <person name="Taylor G.M."/>
            <person name="Donoghue H.D."/>
            <person name="Bouwman A."/>
            <person name="Mays S."/>
            <person name="Watson C."/>
            <person name="Lockwood D."/>
            <person name="Khamispour A."/>
            <person name="Dowlati Y."/>
            <person name="Jianping S."/>
            <person name="Rea T.H."/>
            <person name="Vera-Cabrera L."/>
            <person name="Stefani M.M."/>
            <person name="Banu S."/>
            <person name="Macdonald M."/>
            <person name="Sapkota B.R."/>
            <person name="Spencer J.S."/>
            <person name="Thomas J."/>
            <person name="Harshman K."/>
            <person name="Singh P."/>
            <person name="Busso P."/>
            <person name="Gattiker A."/>
            <person name="Rougemont J."/>
            <person name="Brennan P.J."/>
            <person name="Cole S.T."/>
        </authorList>
    </citation>
    <scope>NUCLEOTIDE SEQUENCE [LARGE SCALE GENOMIC DNA]</scope>
    <source>
        <strain>Br4923</strain>
    </source>
</reference>
<keyword id="KW-0687">Ribonucleoprotein</keyword>
<keyword id="KW-0689">Ribosomal protein</keyword>
<keyword id="KW-0694">RNA-binding</keyword>
<keyword id="KW-0699">rRNA-binding</keyword>